<comment type="function">
    <text evidence="1">Involved in protein export. Acts as a chaperone by maintaining the newly synthesized protein in an open conformation. Functions as a peptidyl-prolyl cis-trans isomerase.</text>
</comment>
<comment type="catalytic activity">
    <reaction evidence="1">
        <text>[protein]-peptidylproline (omega=180) = [protein]-peptidylproline (omega=0)</text>
        <dbReference type="Rhea" id="RHEA:16237"/>
        <dbReference type="Rhea" id="RHEA-COMP:10747"/>
        <dbReference type="Rhea" id="RHEA-COMP:10748"/>
        <dbReference type="ChEBI" id="CHEBI:83833"/>
        <dbReference type="ChEBI" id="CHEBI:83834"/>
        <dbReference type="EC" id="5.2.1.8"/>
    </reaction>
</comment>
<comment type="subcellular location">
    <subcellularLocation>
        <location>Cytoplasm</location>
    </subcellularLocation>
    <text evidence="1">About half TF is bound to the ribosome near the polypeptide exit tunnel while the other half is free in the cytoplasm.</text>
</comment>
<comment type="domain">
    <text evidence="1">Consists of 3 domains; the N-terminus binds the ribosome, the middle domain has PPIase activity, while the C-terminus has intrinsic chaperone activity on its own.</text>
</comment>
<comment type="similarity">
    <text evidence="1">Belongs to the FKBP-type PPIase family. Tig subfamily.</text>
</comment>
<reference key="1">
    <citation type="submission" date="2007-09" db="EMBL/GenBank/DDBJ databases">
        <title>Complete genome sequence of Rickettsia canadensis.</title>
        <authorList>
            <person name="Madan A."/>
            <person name="Fahey J."/>
            <person name="Helton E."/>
            <person name="Ketteman M."/>
            <person name="Madan A."/>
            <person name="Rodrigues S."/>
            <person name="Sanchez A."/>
            <person name="Whiting M."/>
            <person name="Dasch G."/>
            <person name="Eremeeva M."/>
        </authorList>
    </citation>
    <scope>NUCLEOTIDE SEQUENCE [LARGE SCALE GENOMIC DNA]</scope>
    <source>
        <strain>McKiel</strain>
    </source>
</reference>
<feature type="chain" id="PRO_1000022746" description="Trigger factor">
    <location>
        <begin position="1"/>
        <end position="442"/>
    </location>
</feature>
<feature type="domain" description="PPIase FKBP-type" evidence="1">
    <location>
        <begin position="162"/>
        <end position="247"/>
    </location>
</feature>
<protein>
    <recommendedName>
        <fullName evidence="1">Trigger factor</fullName>
        <shortName evidence="1">TF</shortName>
        <ecNumber evidence="1">5.2.1.8</ecNumber>
    </recommendedName>
    <alternativeName>
        <fullName evidence="1">PPIase</fullName>
    </alternativeName>
</protein>
<organism>
    <name type="scientific">Rickettsia canadensis (strain McKiel)</name>
    <dbReference type="NCBI Taxonomy" id="293613"/>
    <lineage>
        <taxon>Bacteria</taxon>
        <taxon>Pseudomonadati</taxon>
        <taxon>Pseudomonadota</taxon>
        <taxon>Alphaproteobacteria</taxon>
        <taxon>Rickettsiales</taxon>
        <taxon>Rickettsiaceae</taxon>
        <taxon>Rickettsieae</taxon>
        <taxon>Rickettsia</taxon>
        <taxon>belli group</taxon>
    </lineage>
</organism>
<keyword id="KW-0131">Cell cycle</keyword>
<keyword id="KW-0132">Cell division</keyword>
<keyword id="KW-0143">Chaperone</keyword>
<keyword id="KW-0963">Cytoplasm</keyword>
<keyword id="KW-0413">Isomerase</keyword>
<keyword id="KW-0697">Rotamase</keyword>
<evidence type="ECO:0000255" key="1">
    <source>
        <dbReference type="HAMAP-Rule" id="MF_00303"/>
    </source>
</evidence>
<dbReference type="EC" id="5.2.1.8" evidence="1"/>
<dbReference type="EMBL" id="CP000409">
    <property type="protein sequence ID" value="ABV73995.1"/>
    <property type="molecule type" value="Genomic_DNA"/>
</dbReference>
<dbReference type="RefSeq" id="WP_012149190.1">
    <property type="nucleotide sequence ID" value="NC_009879.1"/>
</dbReference>
<dbReference type="SMR" id="A8F062"/>
<dbReference type="STRING" id="293613.A1E_05395"/>
<dbReference type="KEGG" id="rcm:A1E_05395"/>
<dbReference type="eggNOG" id="COG0544">
    <property type="taxonomic scope" value="Bacteria"/>
</dbReference>
<dbReference type="HOGENOM" id="CLU_033058_2_2_5"/>
<dbReference type="Proteomes" id="UP000007056">
    <property type="component" value="Chromosome"/>
</dbReference>
<dbReference type="GO" id="GO:0005737">
    <property type="term" value="C:cytoplasm"/>
    <property type="evidence" value="ECO:0007669"/>
    <property type="project" value="UniProtKB-SubCell"/>
</dbReference>
<dbReference type="GO" id="GO:0003755">
    <property type="term" value="F:peptidyl-prolyl cis-trans isomerase activity"/>
    <property type="evidence" value="ECO:0007669"/>
    <property type="project" value="UniProtKB-UniRule"/>
</dbReference>
<dbReference type="GO" id="GO:0044183">
    <property type="term" value="F:protein folding chaperone"/>
    <property type="evidence" value="ECO:0007669"/>
    <property type="project" value="TreeGrafter"/>
</dbReference>
<dbReference type="GO" id="GO:0043022">
    <property type="term" value="F:ribosome binding"/>
    <property type="evidence" value="ECO:0007669"/>
    <property type="project" value="TreeGrafter"/>
</dbReference>
<dbReference type="GO" id="GO:0051083">
    <property type="term" value="P:'de novo' cotranslational protein folding"/>
    <property type="evidence" value="ECO:0007669"/>
    <property type="project" value="TreeGrafter"/>
</dbReference>
<dbReference type="GO" id="GO:0051301">
    <property type="term" value="P:cell division"/>
    <property type="evidence" value="ECO:0007669"/>
    <property type="project" value="UniProtKB-KW"/>
</dbReference>
<dbReference type="GO" id="GO:0061077">
    <property type="term" value="P:chaperone-mediated protein folding"/>
    <property type="evidence" value="ECO:0007669"/>
    <property type="project" value="TreeGrafter"/>
</dbReference>
<dbReference type="GO" id="GO:0015031">
    <property type="term" value="P:protein transport"/>
    <property type="evidence" value="ECO:0007669"/>
    <property type="project" value="UniProtKB-UniRule"/>
</dbReference>
<dbReference type="GO" id="GO:0043335">
    <property type="term" value="P:protein unfolding"/>
    <property type="evidence" value="ECO:0007669"/>
    <property type="project" value="TreeGrafter"/>
</dbReference>
<dbReference type="FunFam" id="3.10.50.40:FF:000001">
    <property type="entry name" value="Trigger factor"/>
    <property type="match status" value="1"/>
</dbReference>
<dbReference type="Gene3D" id="3.10.50.40">
    <property type="match status" value="1"/>
</dbReference>
<dbReference type="Gene3D" id="3.30.70.1050">
    <property type="entry name" value="Trigger factor ribosome-binding domain"/>
    <property type="match status" value="1"/>
</dbReference>
<dbReference type="Gene3D" id="1.10.3120.10">
    <property type="entry name" value="Trigger factor, C-terminal domain"/>
    <property type="match status" value="1"/>
</dbReference>
<dbReference type="HAMAP" id="MF_00303">
    <property type="entry name" value="Trigger_factor_Tig"/>
    <property type="match status" value="1"/>
</dbReference>
<dbReference type="InterPro" id="IPR046357">
    <property type="entry name" value="PPIase_dom_sf"/>
</dbReference>
<dbReference type="InterPro" id="IPR001179">
    <property type="entry name" value="PPIase_FKBP_dom"/>
</dbReference>
<dbReference type="InterPro" id="IPR005215">
    <property type="entry name" value="Trig_fac"/>
</dbReference>
<dbReference type="InterPro" id="IPR008880">
    <property type="entry name" value="Trigger_fac_C"/>
</dbReference>
<dbReference type="InterPro" id="IPR037041">
    <property type="entry name" value="Trigger_fac_C_sf"/>
</dbReference>
<dbReference type="InterPro" id="IPR008881">
    <property type="entry name" value="Trigger_fac_ribosome-bd_bac"/>
</dbReference>
<dbReference type="InterPro" id="IPR036611">
    <property type="entry name" value="Trigger_fac_ribosome-bd_sf"/>
</dbReference>
<dbReference type="InterPro" id="IPR027304">
    <property type="entry name" value="Trigger_fact/SurA_dom_sf"/>
</dbReference>
<dbReference type="NCBIfam" id="TIGR00115">
    <property type="entry name" value="tig"/>
    <property type="match status" value="1"/>
</dbReference>
<dbReference type="PANTHER" id="PTHR30560">
    <property type="entry name" value="TRIGGER FACTOR CHAPERONE AND PEPTIDYL-PROLYL CIS/TRANS ISOMERASE"/>
    <property type="match status" value="1"/>
</dbReference>
<dbReference type="PANTHER" id="PTHR30560:SF3">
    <property type="entry name" value="TRIGGER FACTOR-LIKE PROTEIN TIG, CHLOROPLASTIC"/>
    <property type="match status" value="1"/>
</dbReference>
<dbReference type="Pfam" id="PF00254">
    <property type="entry name" value="FKBP_C"/>
    <property type="match status" value="1"/>
</dbReference>
<dbReference type="Pfam" id="PF05698">
    <property type="entry name" value="Trigger_C"/>
    <property type="match status" value="1"/>
</dbReference>
<dbReference type="Pfam" id="PF05697">
    <property type="entry name" value="Trigger_N"/>
    <property type="match status" value="1"/>
</dbReference>
<dbReference type="PIRSF" id="PIRSF003095">
    <property type="entry name" value="Trigger_factor"/>
    <property type="match status" value="1"/>
</dbReference>
<dbReference type="SUPFAM" id="SSF54534">
    <property type="entry name" value="FKBP-like"/>
    <property type="match status" value="1"/>
</dbReference>
<dbReference type="SUPFAM" id="SSF109998">
    <property type="entry name" value="Triger factor/SurA peptide-binding domain-like"/>
    <property type="match status" value="1"/>
</dbReference>
<dbReference type="SUPFAM" id="SSF102735">
    <property type="entry name" value="Trigger factor ribosome-binding domain"/>
    <property type="match status" value="1"/>
</dbReference>
<dbReference type="PROSITE" id="PS50059">
    <property type="entry name" value="FKBP_PPIASE"/>
    <property type="match status" value="1"/>
</dbReference>
<accession>A8F062</accession>
<name>TIG_RICCK</name>
<gene>
    <name evidence="1" type="primary">tig</name>
    <name type="ordered locus">A1E_05395</name>
</gene>
<sequence>MGITVLKNEGLDFHAKISTPLSEIDDDMQKELLDLTKKVKIAGFRAGKVPVSIVKKKYGTSIRNDIIERRINHWVNHVIKEHNLNIIGRPKIEELQNEPDKALEFTVKIEILPKITIPDLKKISLDRPKLEVKPKDVEEQLEKLATLTKSYTKESKVTIKDGDQVTIDAIGYIKDKTFDGGKLNDLKVVIGSNTLIPGFEKQLIGSKTGSEIDVNVTFPENYHAKDLAGKDARFVVQIKAVHTSEPTLIDDEFAKKFQSNNLEELRTHFAKQIENESEEAINTIMKMNLFDKLEKLLDFDVPESLLEQEKNILKSETDKDESLLKDKSSKEITEYYNKLALRRVRIGLLLAEYAKSKNLQLEPDDFKKVIIQQARNFPGQENMIFDFYKNNPKAIEALKGTALEDKVVQYIFNNEIKLKEKKYTKEELEKYLEEEEQRITLI</sequence>
<proteinExistence type="inferred from homology"/>